<reference key="1">
    <citation type="journal article" date="2004" name="Science">
        <title>The Ashbya gossypii genome as a tool for mapping the ancient Saccharomyces cerevisiae genome.</title>
        <authorList>
            <person name="Dietrich F.S."/>
            <person name="Voegeli S."/>
            <person name="Brachat S."/>
            <person name="Lerch A."/>
            <person name="Gates K."/>
            <person name="Steiner S."/>
            <person name="Mohr C."/>
            <person name="Poehlmann R."/>
            <person name="Luedi P."/>
            <person name="Choi S."/>
            <person name="Wing R.A."/>
            <person name="Flavier A."/>
            <person name="Gaffney T.D."/>
            <person name="Philippsen P."/>
        </authorList>
    </citation>
    <scope>NUCLEOTIDE SEQUENCE [LARGE SCALE GENOMIC DNA]</scope>
    <source>
        <strain>ATCC 10895 / CBS 109.51 / FGSC 9923 / NRRL Y-1056</strain>
    </source>
</reference>
<reference key="2">
    <citation type="journal article" date="2013" name="G3 (Bethesda)">
        <title>Genomes of Ashbya fungi isolated from insects reveal four mating-type loci, numerous translocations, lack of transposons, and distinct gene duplications.</title>
        <authorList>
            <person name="Dietrich F.S."/>
            <person name="Voegeli S."/>
            <person name="Kuo S."/>
            <person name="Philippsen P."/>
        </authorList>
    </citation>
    <scope>GENOME REANNOTATION</scope>
    <source>
        <strain>ATCC 10895 / CBS 109.51 / FGSC 9923 / NRRL Y-1056</strain>
    </source>
</reference>
<proteinExistence type="inferred from homology"/>
<feature type="chain" id="PRO_0000412315" description="Signal peptidase complex catalytic subunit SEC11">
    <location>
        <begin position="1"/>
        <end position="167"/>
    </location>
</feature>
<feature type="topological domain" description="Cytoplasmic" evidence="3">
    <location>
        <begin position="1"/>
        <end position="6"/>
    </location>
</feature>
<feature type="transmembrane region" description="Helical; Signal-anchor for type II membrane protein" evidence="3">
    <location>
        <begin position="7"/>
        <end position="24"/>
    </location>
</feature>
<feature type="topological domain" description="Lumenal" evidence="3">
    <location>
        <begin position="25"/>
        <end position="167"/>
    </location>
</feature>
<feature type="region of interest" description="C-terminal short (CTS) helix" evidence="2">
    <location>
        <begin position="153"/>
        <end position="164"/>
    </location>
</feature>
<feature type="active site" description="Charge relay system" evidence="1">
    <location>
        <position position="44"/>
    </location>
</feature>
<feature type="active site" description="Charge relay system" evidence="1">
    <location>
        <position position="83"/>
    </location>
</feature>
<feature type="active site" description="Charge relay system" evidence="1">
    <location>
        <position position="109"/>
    </location>
</feature>
<evidence type="ECO:0000250" key="1">
    <source>
        <dbReference type="UniProtKB" id="P15367"/>
    </source>
</evidence>
<evidence type="ECO:0000250" key="2">
    <source>
        <dbReference type="UniProtKB" id="P67812"/>
    </source>
</evidence>
<evidence type="ECO:0000255" key="3"/>
<evidence type="ECO:0000305" key="4"/>
<organism>
    <name type="scientific">Eremothecium gossypii (strain ATCC 10895 / CBS 109.51 / FGSC 9923 / NRRL Y-1056)</name>
    <name type="common">Yeast</name>
    <name type="synonym">Ashbya gossypii</name>
    <dbReference type="NCBI Taxonomy" id="284811"/>
    <lineage>
        <taxon>Eukaryota</taxon>
        <taxon>Fungi</taxon>
        <taxon>Dikarya</taxon>
        <taxon>Ascomycota</taxon>
        <taxon>Saccharomycotina</taxon>
        <taxon>Saccharomycetes</taxon>
        <taxon>Saccharomycetales</taxon>
        <taxon>Saccharomycetaceae</taxon>
        <taxon>Eremothecium</taxon>
    </lineage>
</organism>
<comment type="function">
    <text evidence="1 2">Catalytic component of the signal peptidase complex (SPC) which catalyzes the cleavage of N-terminal signal sequences from nascent proteins as they are translocated into the lumen of the endoplasmic reticulum (By similarity). Specifically cleaves N-terminal signal peptides that contain a hydrophobic alpha-helix (h-region) shorter than 18-20 amino acids (By similarity).</text>
</comment>
<comment type="catalytic activity">
    <reaction evidence="1">
        <text>Cleavage of hydrophobic, N-terminal signal or leader sequences from secreted and periplasmic proteins.</text>
        <dbReference type="EC" id="3.4.21.89"/>
    </reaction>
</comment>
<comment type="subunit">
    <text evidence="1 2">Component of the signal peptidase complex (SPC) composed of a catalytic subunit SEC11 and three accessory subunits SPC1, SPC2 and SPC3 (By similarity). The complex induces a local thinning of the ER membrane which is used to measure the length of the signal peptide (SP) h-region of protein substrates. This ensures the selectivity of the complex towards h-regions shorter than 18-20 amino acids (By similarity). SPC associates with the translocon complex (By similarity).</text>
</comment>
<comment type="subcellular location">
    <subcellularLocation>
        <location evidence="1">Endoplasmic reticulum membrane</location>
        <topology evidence="1">Single-pass type II membrane protein</topology>
    </subcellularLocation>
</comment>
<comment type="domain">
    <text evidence="2">The C-terminal short (CTS) helix is essential for catalytic activity. It may be accommodated as a transmembrane helix in the thinned membrane environment of the complex, similarly to the signal peptide in the complex substrates.</text>
</comment>
<comment type="similarity">
    <text evidence="4">Belongs to the peptidase S26B family.</text>
</comment>
<protein>
    <recommendedName>
        <fullName>Signal peptidase complex catalytic subunit SEC11</fullName>
        <ecNumber evidence="1">3.4.21.89</ecNumber>
    </recommendedName>
    <alternativeName>
        <fullName>Signal peptidase I</fullName>
    </alternativeName>
</protein>
<name>SEC11_EREGS</name>
<dbReference type="EC" id="3.4.21.89" evidence="1"/>
<dbReference type="EMBL" id="AE016817">
    <property type="protein sequence ID" value="AAS52079.1"/>
    <property type="molecule type" value="Genomic_DNA"/>
</dbReference>
<dbReference type="RefSeq" id="NP_984255.1">
    <property type="nucleotide sequence ID" value="NM_209608.1"/>
</dbReference>
<dbReference type="SMR" id="Q759W4"/>
<dbReference type="FunCoup" id="Q759W4">
    <property type="interactions" value="689"/>
</dbReference>
<dbReference type="STRING" id="284811.Q759W4"/>
<dbReference type="MEROPS" id="S26.010"/>
<dbReference type="EnsemblFungi" id="AAS52079">
    <property type="protein sequence ID" value="AAS52079"/>
    <property type="gene ID" value="AGOS_ADR158W"/>
</dbReference>
<dbReference type="GeneID" id="4620417"/>
<dbReference type="KEGG" id="ago:AGOS_ADR158W"/>
<dbReference type="eggNOG" id="KOG3342">
    <property type="taxonomic scope" value="Eukaryota"/>
</dbReference>
<dbReference type="HOGENOM" id="CLU_089996_0_0_1"/>
<dbReference type="InParanoid" id="Q759W4"/>
<dbReference type="OMA" id="ILMNEYP"/>
<dbReference type="OrthoDB" id="10257561at2759"/>
<dbReference type="Proteomes" id="UP000000591">
    <property type="component" value="Chromosome IV"/>
</dbReference>
<dbReference type="GO" id="GO:0005787">
    <property type="term" value="C:signal peptidase complex"/>
    <property type="evidence" value="ECO:0000318"/>
    <property type="project" value="GO_Central"/>
</dbReference>
<dbReference type="GO" id="GO:0008233">
    <property type="term" value="F:peptidase activity"/>
    <property type="evidence" value="ECO:0000318"/>
    <property type="project" value="GO_Central"/>
</dbReference>
<dbReference type="GO" id="GO:0004252">
    <property type="term" value="F:serine-type endopeptidase activity"/>
    <property type="evidence" value="ECO:0007669"/>
    <property type="project" value="UniProtKB-EC"/>
</dbReference>
<dbReference type="GO" id="GO:0045047">
    <property type="term" value="P:protein targeting to ER"/>
    <property type="evidence" value="ECO:0007669"/>
    <property type="project" value="EnsemblFungi"/>
</dbReference>
<dbReference type="GO" id="GO:0006465">
    <property type="term" value="P:signal peptide processing"/>
    <property type="evidence" value="ECO:0000318"/>
    <property type="project" value="GO_Central"/>
</dbReference>
<dbReference type="CDD" id="cd06530">
    <property type="entry name" value="S26_SPase_I"/>
    <property type="match status" value="1"/>
</dbReference>
<dbReference type="InterPro" id="IPR036286">
    <property type="entry name" value="LexA/Signal_pep-like_sf"/>
</dbReference>
<dbReference type="InterPro" id="IPR019756">
    <property type="entry name" value="Pept_S26A_signal_pept_1_Ser-AS"/>
</dbReference>
<dbReference type="InterPro" id="IPR015927">
    <property type="entry name" value="Peptidase_S24_S26A/B/C"/>
</dbReference>
<dbReference type="InterPro" id="IPR019533">
    <property type="entry name" value="Peptidase_S26"/>
</dbReference>
<dbReference type="InterPro" id="IPR001733">
    <property type="entry name" value="Peptidase_S26B"/>
</dbReference>
<dbReference type="NCBIfam" id="TIGR02228">
    <property type="entry name" value="sigpep_I_arch"/>
    <property type="match status" value="1"/>
</dbReference>
<dbReference type="PANTHER" id="PTHR10806">
    <property type="entry name" value="SIGNAL PEPTIDASE COMPLEX CATALYTIC SUBUNIT SEC11"/>
    <property type="match status" value="1"/>
</dbReference>
<dbReference type="PANTHER" id="PTHR10806:SF6">
    <property type="entry name" value="SIGNAL PEPTIDASE COMPLEX CATALYTIC SUBUNIT SEC11"/>
    <property type="match status" value="1"/>
</dbReference>
<dbReference type="Pfam" id="PF00717">
    <property type="entry name" value="Peptidase_S24"/>
    <property type="match status" value="1"/>
</dbReference>
<dbReference type="PRINTS" id="PR00728">
    <property type="entry name" value="SIGNALPTASE"/>
</dbReference>
<dbReference type="SUPFAM" id="SSF51306">
    <property type="entry name" value="LexA/Signal peptidase"/>
    <property type="match status" value="1"/>
</dbReference>
<dbReference type="PROSITE" id="PS00501">
    <property type="entry name" value="SPASE_I_1"/>
    <property type="match status" value="1"/>
</dbReference>
<accession>Q759W4</accession>
<keyword id="KW-0256">Endoplasmic reticulum</keyword>
<keyword id="KW-0378">Hydrolase</keyword>
<keyword id="KW-0472">Membrane</keyword>
<keyword id="KW-0645">Protease</keyword>
<keyword id="KW-1185">Reference proteome</keyword>
<keyword id="KW-0735">Signal-anchor</keyword>
<keyword id="KW-0812">Transmembrane</keyword>
<keyword id="KW-1133">Transmembrane helix</keyword>
<gene>
    <name type="primary">SEC11</name>
    <name type="ordered locus">ADR158W</name>
</gene>
<sequence length="167" mass="18821">MNIRQQLTKFLGLFLTLASAFMFWKGLSVVTNSHSPIVVVLSGSMEPAFQRGDILFLWNRERFNKVGDVIVYEVDAKSIPIVHRVVREHRDKNGRQLLLTKGDNNAADDIALYGRKQSYLRRDKDIVGTVKGYLPKLGYVTILVSENQYAKFALMGMLALSSLLGSE</sequence>